<reference key="1">
    <citation type="journal article" date="1993" name="Mol. Microbiol.">
        <title>DNA sequence, structure and gene expression of mycobacteriophage L5: a phage system for mycobacterial genetics.</title>
        <authorList>
            <person name="Hatfull G.F."/>
            <person name="Sarkis G.J."/>
        </authorList>
    </citation>
    <scope>NUCLEOTIDE SEQUENCE [LARGE SCALE GENOMIC DNA]</scope>
</reference>
<organism>
    <name type="scientific">Mycobacterium phage L5</name>
    <name type="common">Mycobacteriophage L5</name>
    <dbReference type="NCBI Taxonomy" id="31757"/>
    <lineage>
        <taxon>Viruses</taxon>
        <taxon>Duplodnaviria</taxon>
        <taxon>Heunggongvirae</taxon>
        <taxon>Uroviricota</taxon>
        <taxon>Caudoviricetes</taxon>
        <taxon>Fromanvirus</taxon>
    </lineage>
</organism>
<feature type="chain" id="PRO_0000164705" description="Gene 5 protein">
    <location>
        <begin position="1"/>
        <end position="155"/>
    </location>
</feature>
<feature type="region of interest" description="Disordered" evidence="1">
    <location>
        <begin position="1"/>
        <end position="26"/>
    </location>
</feature>
<feature type="compositionally biased region" description="Basic and acidic residues" evidence="1">
    <location>
        <begin position="8"/>
        <end position="19"/>
    </location>
</feature>
<organismHost>
    <name type="scientific">Mycobacterium</name>
    <dbReference type="NCBI Taxonomy" id="1763"/>
</organismHost>
<name>VG05_BPML5</name>
<accession>Q05267</accession>
<evidence type="ECO:0000256" key="1">
    <source>
        <dbReference type="SAM" id="MobiDB-lite"/>
    </source>
</evidence>
<gene>
    <name type="primary">5</name>
</gene>
<dbReference type="EMBL" id="Z18946">
    <property type="protein sequence ID" value="CAA79384.1"/>
    <property type="molecule type" value="Genomic_DNA"/>
</dbReference>
<dbReference type="PIR" id="S30953">
    <property type="entry name" value="S30953"/>
</dbReference>
<dbReference type="RefSeq" id="NP_039672.1">
    <property type="nucleotide sequence ID" value="NC_001335.1"/>
</dbReference>
<dbReference type="SMR" id="Q05267"/>
<dbReference type="GeneID" id="2942961"/>
<dbReference type="KEGG" id="vg:2942961"/>
<dbReference type="OrthoDB" id="16531at10239"/>
<dbReference type="Proteomes" id="UP000002123">
    <property type="component" value="Genome"/>
</dbReference>
<proteinExistence type="predicted"/>
<protein>
    <recommendedName>
        <fullName>Gene 5 protein</fullName>
    </recommendedName>
    <alternativeName>
        <fullName>Gp5</fullName>
    </alternativeName>
</protein>
<sequence>MGTRGPIGKRDEERVRRNTPDSPTDTIQMPGLVTIPEMGDLSHDGRTHQLVKDMYESIKQSAAVKYYEPTDWQMARLALYTLNQELIAAENNGKPVGAMKLTAINQMLSALLLTEGDRRRVRLEVERAPADPTGGKVVDVTDVLKQRLAKASGGS</sequence>
<keyword id="KW-1185">Reference proteome</keyword>